<gene>
    <name type="primary">Slc22a8</name>
    <name type="synonym">Oat3</name>
    <name type="synonym">Roct</name>
</gene>
<accession>O88909</accession>
<accession>Q3TZF9</accession>
<accession>Q8CCX3</accession>
<accession>Q8CFH5</accession>
<accession>Q91WJ9</accession>
<name>S22A8_MOUSE</name>
<organism>
    <name type="scientific">Mus musculus</name>
    <name type="common">Mouse</name>
    <dbReference type="NCBI Taxonomy" id="10090"/>
    <lineage>
        <taxon>Eukaryota</taxon>
        <taxon>Metazoa</taxon>
        <taxon>Chordata</taxon>
        <taxon>Craniata</taxon>
        <taxon>Vertebrata</taxon>
        <taxon>Euteleostomi</taxon>
        <taxon>Mammalia</taxon>
        <taxon>Eutheria</taxon>
        <taxon>Euarchontoglires</taxon>
        <taxon>Glires</taxon>
        <taxon>Rodentia</taxon>
        <taxon>Myomorpha</taxon>
        <taxon>Muroidea</taxon>
        <taxon>Muridae</taxon>
        <taxon>Murinae</taxon>
        <taxon>Mus</taxon>
        <taxon>Mus</taxon>
    </lineage>
</organism>
<keyword id="KW-1003">Cell membrane</keyword>
<keyword id="KW-0216">Detoxification</keyword>
<keyword id="KW-0325">Glycoprotein</keyword>
<keyword id="KW-0406">Ion transport</keyword>
<keyword id="KW-0445">Lipid transport</keyword>
<keyword id="KW-0472">Membrane</keyword>
<keyword id="KW-0597">Phosphoprotein</keyword>
<keyword id="KW-1185">Reference proteome</keyword>
<keyword id="KW-0812">Transmembrane</keyword>
<keyword id="KW-1133">Transmembrane helix</keyword>
<keyword id="KW-0813">Transport</keyword>
<protein>
    <recommendedName>
        <fullName evidence="15 16">Organic anion transporter 3</fullName>
        <shortName evidence="16">mOat3</shortName>
    </recommendedName>
    <alternativeName>
        <fullName>Organic anion/dicarboxylate exchanger</fullName>
    </alternativeName>
    <alternativeName>
        <fullName evidence="14">Reduced in osteosclerosis transporter</fullName>
        <shortName evidence="14">Roct</shortName>
    </alternativeName>
    <alternativeName>
        <fullName>Solute carrier family 22 member 8</fullName>
    </alternativeName>
</protein>
<feature type="chain" id="PRO_0000273441" description="Organic anion transporter 3">
    <location>
        <begin position="1"/>
        <end position="537"/>
    </location>
</feature>
<feature type="topological domain" description="Cytoplasmic" evidence="4">
    <location>
        <begin position="1"/>
        <end position="11"/>
    </location>
</feature>
<feature type="transmembrane region" description="Helical" evidence="4">
    <location>
        <begin position="12"/>
        <end position="32"/>
    </location>
</feature>
<feature type="topological domain" description="Extracellular" evidence="4">
    <location>
        <begin position="33"/>
        <end position="123"/>
    </location>
</feature>
<feature type="transmembrane region" description="Helical" evidence="4">
    <location>
        <begin position="124"/>
        <end position="144"/>
    </location>
</feature>
<feature type="topological domain" description="Cytoplasmic" evidence="4">
    <location>
        <begin position="145"/>
        <end position="150"/>
    </location>
</feature>
<feature type="transmembrane region" description="Helical" evidence="4">
    <location>
        <begin position="151"/>
        <end position="171"/>
    </location>
</feature>
<feature type="topological domain" description="Extracellular" evidence="4">
    <location>
        <begin position="172"/>
        <end position="176"/>
    </location>
</feature>
<feature type="transmembrane region" description="Helical" evidence="4">
    <location>
        <begin position="177"/>
        <end position="197"/>
    </location>
</feature>
<feature type="topological domain" description="Cytoplasmic" evidence="4">
    <location>
        <begin position="198"/>
        <end position="212"/>
    </location>
</feature>
<feature type="transmembrane region" description="Helical" evidence="4">
    <location>
        <begin position="213"/>
        <end position="233"/>
    </location>
</feature>
<feature type="topological domain" description="Extracellular" evidence="4">
    <location>
        <begin position="234"/>
        <end position="236"/>
    </location>
</feature>
<feature type="transmembrane region" description="Helical" evidence="4">
    <location>
        <begin position="237"/>
        <end position="257"/>
    </location>
</feature>
<feature type="topological domain" description="Cytoplasmic" evidence="4">
    <location>
        <begin position="258"/>
        <end position="327"/>
    </location>
</feature>
<feature type="transmembrane region" description="Helical" evidence="4">
    <location>
        <begin position="328"/>
        <end position="348"/>
    </location>
</feature>
<feature type="topological domain" description="Extracellular" evidence="4">
    <location>
        <begin position="349"/>
        <end position="354"/>
    </location>
</feature>
<feature type="transmembrane region" description="Helical" evidence="4">
    <location>
        <begin position="355"/>
        <end position="375"/>
    </location>
</feature>
<feature type="topological domain" description="Cytoplasmic" evidence="4">
    <location>
        <begin position="376"/>
        <end position="383"/>
    </location>
</feature>
<feature type="transmembrane region" description="Helical" evidence="4">
    <location>
        <begin position="384"/>
        <end position="404"/>
    </location>
</feature>
<feature type="topological domain" description="Extracellular" evidence="4">
    <location>
        <begin position="405"/>
        <end position="411"/>
    </location>
</feature>
<feature type="transmembrane region" description="Helical" evidence="4">
    <location>
        <begin position="412"/>
        <end position="432"/>
    </location>
</feature>
<feature type="topological domain" description="Cytoplasmic" evidence="4">
    <location>
        <begin position="433"/>
        <end position="471"/>
    </location>
</feature>
<feature type="transmembrane region" description="Helical" evidence="4">
    <location>
        <begin position="472"/>
        <end position="492"/>
    </location>
</feature>
<feature type="topological domain" description="Extracellular" evidence="4">
    <location>
        <begin position="493"/>
        <end position="537"/>
    </location>
</feature>
<feature type="region of interest" description="Disordered" evidence="5">
    <location>
        <begin position="513"/>
        <end position="537"/>
    </location>
</feature>
<feature type="modified residue" description="Phosphoserine" evidence="3">
    <location>
        <position position="4"/>
    </location>
</feature>
<feature type="glycosylation site" description="N-linked (GlcNAc...) asparagine" evidence="4">
    <location>
        <position position="81"/>
    </location>
</feature>
<feature type="sequence conflict" description="In Ref. 1; AAC61265." evidence="17" ref="1">
    <original>K</original>
    <variation>R</variation>
    <location>
        <position position="271"/>
    </location>
</feature>
<feature type="sequence conflict" description="In Ref. 2; BAC27624." evidence="17" ref="2">
    <original>G</original>
    <variation>V</variation>
    <location>
        <position position="479"/>
    </location>
</feature>
<reference key="1">
    <citation type="journal article" date="1999" name="Genomics">
        <title>A novel putative transporter maps to the osteosclerosis (oc) mutation and is not expressed in the oc mutant mouse.</title>
        <authorList>
            <person name="Brady K.P."/>
            <person name="Dushkin H."/>
            <person name="Foernzler D."/>
            <person name="Koike T."/>
            <person name="Magner F."/>
            <person name="Her H."/>
            <person name="Gullans S."/>
            <person name="Segre G.V."/>
            <person name="Green R.M."/>
            <person name="Beier D.R."/>
        </authorList>
    </citation>
    <scope>NUCLEOTIDE SEQUENCE [MRNA]</scope>
    <scope>TISSUE SPECIFICITY</scope>
    <source>
        <tissue>Kidney</tissue>
    </source>
</reference>
<reference key="2">
    <citation type="journal article" date="2005" name="Science">
        <title>The transcriptional landscape of the mammalian genome.</title>
        <authorList>
            <person name="Carninci P."/>
            <person name="Kasukawa T."/>
            <person name="Katayama S."/>
            <person name="Gough J."/>
            <person name="Frith M.C."/>
            <person name="Maeda N."/>
            <person name="Oyama R."/>
            <person name="Ravasi T."/>
            <person name="Lenhard B."/>
            <person name="Wells C."/>
            <person name="Kodzius R."/>
            <person name="Shimokawa K."/>
            <person name="Bajic V.B."/>
            <person name="Brenner S.E."/>
            <person name="Batalov S."/>
            <person name="Forrest A.R."/>
            <person name="Zavolan M."/>
            <person name="Davis M.J."/>
            <person name="Wilming L.G."/>
            <person name="Aidinis V."/>
            <person name="Allen J.E."/>
            <person name="Ambesi-Impiombato A."/>
            <person name="Apweiler R."/>
            <person name="Aturaliya R.N."/>
            <person name="Bailey T.L."/>
            <person name="Bansal M."/>
            <person name="Baxter L."/>
            <person name="Beisel K.W."/>
            <person name="Bersano T."/>
            <person name="Bono H."/>
            <person name="Chalk A.M."/>
            <person name="Chiu K.P."/>
            <person name="Choudhary V."/>
            <person name="Christoffels A."/>
            <person name="Clutterbuck D.R."/>
            <person name="Crowe M.L."/>
            <person name="Dalla E."/>
            <person name="Dalrymple B.P."/>
            <person name="de Bono B."/>
            <person name="Della Gatta G."/>
            <person name="di Bernardo D."/>
            <person name="Down T."/>
            <person name="Engstrom P."/>
            <person name="Fagiolini M."/>
            <person name="Faulkner G."/>
            <person name="Fletcher C.F."/>
            <person name="Fukushima T."/>
            <person name="Furuno M."/>
            <person name="Futaki S."/>
            <person name="Gariboldi M."/>
            <person name="Georgii-Hemming P."/>
            <person name="Gingeras T.R."/>
            <person name="Gojobori T."/>
            <person name="Green R.E."/>
            <person name="Gustincich S."/>
            <person name="Harbers M."/>
            <person name="Hayashi Y."/>
            <person name="Hensch T.K."/>
            <person name="Hirokawa N."/>
            <person name="Hill D."/>
            <person name="Huminiecki L."/>
            <person name="Iacono M."/>
            <person name="Ikeo K."/>
            <person name="Iwama A."/>
            <person name="Ishikawa T."/>
            <person name="Jakt M."/>
            <person name="Kanapin A."/>
            <person name="Katoh M."/>
            <person name="Kawasawa Y."/>
            <person name="Kelso J."/>
            <person name="Kitamura H."/>
            <person name="Kitano H."/>
            <person name="Kollias G."/>
            <person name="Krishnan S.P."/>
            <person name="Kruger A."/>
            <person name="Kummerfeld S.K."/>
            <person name="Kurochkin I.V."/>
            <person name="Lareau L.F."/>
            <person name="Lazarevic D."/>
            <person name="Lipovich L."/>
            <person name="Liu J."/>
            <person name="Liuni S."/>
            <person name="McWilliam S."/>
            <person name="Madan Babu M."/>
            <person name="Madera M."/>
            <person name="Marchionni L."/>
            <person name="Matsuda H."/>
            <person name="Matsuzawa S."/>
            <person name="Miki H."/>
            <person name="Mignone F."/>
            <person name="Miyake S."/>
            <person name="Morris K."/>
            <person name="Mottagui-Tabar S."/>
            <person name="Mulder N."/>
            <person name="Nakano N."/>
            <person name="Nakauchi H."/>
            <person name="Ng P."/>
            <person name="Nilsson R."/>
            <person name="Nishiguchi S."/>
            <person name="Nishikawa S."/>
            <person name="Nori F."/>
            <person name="Ohara O."/>
            <person name="Okazaki Y."/>
            <person name="Orlando V."/>
            <person name="Pang K.C."/>
            <person name="Pavan W.J."/>
            <person name="Pavesi G."/>
            <person name="Pesole G."/>
            <person name="Petrovsky N."/>
            <person name="Piazza S."/>
            <person name="Reed J."/>
            <person name="Reid J.F."/>
            <person name="Ring B.Z."/>
            <person name="Ringwald M."/>
            <person name="Rost B."/>
            <person name="Ruan Y."/>
            <person name="Salzberg S.L."/>
            <person name="Sandelin A."/>
            <person name="Schneider C."/>
            <person name="Schoenbach C."/>
            <person name="Sekiguchi K."/>
            <person name="Semple C.A."/>
            <person name="Seno S."/>
            <person name="Sessa L."/>
            <person name="Sheng Y."/>
            <person name="Shibata Y."/>
            <person name="Shimada H."/>
            <person name="Shimada K."/>
            <person name="Silva D."/>
            <person name="Sinclair B."/>
            <person name="Sperling S."/>
            <person name="Stupka E."/>
            <person name="Sugiura K."/>
            <person name="Sultana R."/>
            <person name="Takenaka Y."/>
            <person name="Taki K."/>
            <person name="Tammoja K."/>
            <person name="Tan S.L."/>
            <person name="Tang S."/>
            <person name="Taylor M.S."/>
            <person name="Tegner J."/>
            <person name="Teichmann S.A."/>
            <person name="Ueda H.R."/>
            <person name="van Nimwegen E."/>
            <person name="Verardo R."/>
            <person name="Wei C.L."/>
            <person name="Yagi K."/>
            <person name="Yamanishi H."/>
            <person name="Zabarovsky E."/>
            <person name="Zhu S."/>
            <person name="Zimmer A."/>
            <person name="Hide W."/>
            <person name="Bult C."/>
            <person name="Grimmond S.M."/>
            <person name="Teasdale R.D."/>
            <person name="Liu E.T."/>
            <person name="Brusic V."/>
            <person name="Quackenbush J."/>
            <person name="Wahlestedt C."/>
            <person name="Mattick J.S."/>
            <person name="Hume D.A."/>
            <person name="Kai C."/>
            <person name="Sasaki D."/>
            <person name="Tomaru Y."/>
            <person name="Fukuda S."/>
            <person name="Kanamori-Katayama M."/>
            <person name="Suzuki M."/>
            <person name="Aoki J."/>
            <person name="Arakawa T."/>
            <person name="Iida J."/>
            <person name="Imamura K."/>
            <person name="Itoh M."/>
            <person name="Kato T."/>
            <person name="Kawaji H."/>
            <person name="Kawagashira N."/>
            <person name="Kawashima T."/>
            <person name="Kojima M."/>
            <person name="Kondo S."/>
            <person name="Konno H."/>
            <person name="Nakano K."/>
            <person name="Ninomiya N."/>
            <person name="Nishio T."/>
            <person name="Okada M."/>
            <person name="Plessy C."/>
            <person name="Shibata K."/>
            <person name="Shiraki T."/>
            <person name="Suzuki S."/>
            <person name="Tagami M."/>
            <person name="Waki K."/>
            <person name="Watahiki A."/>
            <person name="Okamura-Oho Y."/>
            <person name="Suzuki H."/>
            <person name="Kawai J."/>
            <person name="Hayashizaki Y."/>
        </authorList>
    </citation>
    <scope>NUCLEOTIDE SEQUENCE [LARGE SCALE MRNA]</scope>
    <source>
        <strain>C57BL/6J</strain>
        <tissue>Inner ear</tissue>
        <tissue>Medulla oblongata</tissue>
        <tissue>Retina</tissue>
    </source>
</reference>
<reference key="3">
    <citation type="journal article" date="2004" name="Genome Res.">
        <title>The status, quality, and expansion of the NIH full-length cDNA project: the Mammalian Gene Collection (MGC).</title>
        <authorList>
            <consortium name="The MGC Project Team"/>
        </authorList>
    </citation>
    <scope>NUCLEOTIDE SEQUENCE [LARGE SCALE MRNA]</scope>
    <source>
        <strain>FVB/N</strain>
        <tissue>Kidney</tissue>
    </source>
</reference>
<reference key="4">
    <citation type="submission" date="2002-02" db="EMBL/GenBank/DDBJ databases">
        <title>Cloning and functional characterization of mOAT3 (Roct).</title>
        <authorList>
            <person name="Kobayashi Y."/>
            <person name="Shibusawa A."/>
            <person name="Ohshiro N."/>
            <person name="Sasaki T."/>
            <person name="Tokuyama S."/>
            <person name="Yamamoto T."/>
        </authorList>
    </citation>
    <scope>NUCLEOTIDE SEQUENCE [MRNA] OF 13-537</scope>
    <source>
        <tissue>Kidney</tissue>
    </source>
</reference>
<reference key="5">
    <citation type="journal article" date="2002" name="J. Biol. Chem.">
        <title>Impaired organic anion transport in kidney and choroid plexus of organic anion transporter 3 (Oat3 (Slc22a8)) knockout mice.</title>
        <authorList>
            <person name="Sweet D.H."/>
            <person name="Miller D.S."/>
            <person name="Pritchard J.B."/>
            <person name="Fujiwara Y."/>
            <person name="Beier D.R."/>
            <person name="Nigam S.K."/>
        </authorList>
    </citation>
    <scope>FUNCTION</scope>
    <scope>DISRUPTION PHENOTYPE</scope>
    <scope>TRANSPORTER ACTIVITY</scope>
    <scope>TISSUE SPECIFICITY</scope>
</reference>
<reference key="6">
    <citation type="journal article" date="2004" name="Am. J. Physiol.">
        <title>Organic anion transport in choroid plexus from wild-type and organic anion transporter 3 (Slc22a8)-null mice.</title>
        <authorList>
            <person name="Sykes D."/>
            <person name="Sweet D.H."/>
            <person name="Lowes S."/>
            <person name="Nigam S.K."/>
            <person name="Pritchard J.B."/>
            <person name="Miller D.S."/>
        </authorList>
    </citation>
    <scope>FUNCTION</scope>
    <scope>TRANSPORTER ACTIVITY</scope>
</reference>
<reference key="7">
    <citation type="journal article" date="2004" name="Drug Metab. Dispos.">
        <title>Renal transport of organic compounds mediated by mouse organic anion transporter 3 (mOat3): further substrate specificity of mOat3.</title>
        <authorList>
            <person name="Kobayashi Y."/>
            <person name="Ohshiro N."/>
            <person name="Tsuchiya A."/>
            <person name="Kohyama N."/>
            <person name="Ohbayashi M."/>
            <person name="Yamamoto T."/>
        </authorList>
    </citation>
    <scope>FUNCTION</scope>
    <scope>TISSUE SPECIFICITY</scope>
    <scope>BIOPHYSICOCHEMICAL PROPERTIES</scope>
    <scope>TRANSPORTER ACTIVITY</scope>
</reference>
<reference key="8">
    <citation type="journal article" date="2005" name="Am. J. Physiol.">
        <title>Murine renal organic anion transporters mOAT1 and mOAT3 facilitate the transport of neuroactive tryptophan metabolites.</title>
        <authorList>
            <person name="Bahn A."/>
            <person name="Ljubojevic M."/>
            <person name="Lorenz H."/>
            <person name="Schultz C."/>
            <person name="Ghebremedhin E."/>
            <person name="Ugele B."/>
            <person name="Sabolic I."/>
            <person name="Burckhardt G."/>
            <person name="Hagos Y."/>
        </authorList>
    </citation>
    <scope>FUNCTION</scope>
    <scope>TRANSPORTER ACTIVITY</scope>
    <scope>SUBCELLULAR LOCATION</scope>
    <scope>TISSUE SPECIFICITY</scope>
</reference>
<reference key="9">
    <citation type="journal article" date="2007" name="J. Pharmacol. Sci.">
        <title>Role of mouse organic anion transporter 3 (mOat3) as a basolateral prostaglandin E2 transport pathway.</title>
        <authorList>
            <person name="Nilwarangkoon S."/>
            <person name="Anzai N."/>
            <person name="Shiraya K."/>
            <person name="Yu E."/>
            <person name="Islam R."/>
            <person name="Cha S.H."/>
            <person name="Onozato M.L."/>
            <person name="Miura D."/>
            <person name="Jutabha P."/>
            <person name="Tojo A."/>
            <person name="Kanai Y."/>
            <person name="Endou H."/>
        </authorList>
    </citation>
    <scope>FUNCTION</scope>
    <scope>TRANSPORTER ACTIVITY</scope>
    <scope>BIOPHYSICOCHEMICAL PROPERTIES</scope>
    <scope>SUBCELLULAR LOCATION</scope>
    <scope>TISSUE SPECIFICITY</scope>
</reference>
<reference key="10">
    <citation type="journal article" date="2011" name="Drug Metab. Dispos.">
        <title>Organic anion transporter 3 mediates the efflux transport of an amphipathic organic anion, dehydroepiandrosterone sulfate, across the blood-brain barrier in mice.</title>
        <authorList>
            <person name="Miyajima M."/>
            <person name="Kusuhara H."/>
            <person name="Fujishima M."/>
            <person name="Adachi Y."/>
            <person name="Sugiyama Y."/>
        </authorList>
    </citation>
    <scope>FUNCTION</scope>
    <scope>TRANSPORTER ACTIVITY</scope>
    <scope>TISSUE SPECIFICITY</scope>
</reference>
<reference key="11">
    <citation type="journal article" date="2013" name="Am. J. Physiol.">
        <title>Sex-dependent expression of Oat3 (Slc22a8) and Oat1 (Slc22a6) proteins in murine kidneys.</title>
        <authorList>
            <person name="Breljak D."/>
            <person name="Brzica H."/>
            <person name="Sweet D.H."/>
            <person name="Anzai N."/>
            <person name="Sabolic I."/>
        </authorList>
    </citation>
    <scope>TISSUE SPECIFICITY</scope>
    <scope>SUBCELLULAR LOCATION</scope>
    <scope>ACTIVITY REGULATION</scope>
</reference>
<reference key="12">
    <citation type="journal article" date="2010" name="Cell">
        <title>A tissue-specific atlas of mouse protein phosphorylation and expression.</title>
        <authorList>
            <person name="Huttlin E.L."/>
            <person name="Jedrychowski M.P."/>
            <person name="Elias J.E."/>
            <person name="Goswami T."/>
            <person name="Rad R."/>
            <person name="Beausoleil S.A."/>
            <person name="Villen J."/>
            <person name="Haas W."/>
            <person name="Sowa M.E."/>
            <person name="Gygi S.P."/>
        </authorList>
    </citation>
    <scope>IDENTIFICATION BY MASS SPECTROMETRY [LARGE SCALE ANALYSIS]</scope>
    <source>
        <tissue>Kidney</tissue>
    </source>
</reference>
<comment type="function">
    <text evidence="2 3 7 8 9 11 12">Functions as an organic anion/dicarboxylate exchanger that couples organic anion uptake indirectly to the sodium gradient (By similarity). Transports organic anions such as estrone 3-sulfate (E1S) and urate in exchange for dicarboxylates such as glutarate or ketoglutarate (2-oxoglutarate) (PubMed:17220594). Plays an important role in the excretion of endogenous and exogenous organic anions, especially from the kidney and the brain (PubMed:12011098, PubMed:15075193, PubMed:17220594, PubMed:21325432). E1S transport is pH- and chloride-dependent and may also involve E1S/cGMP exchange. Responsible for the transport of prostaglandin E2 (PGE2) and prostaglandin F2(alpha) (PGF2(alpha)) in the basolateral side of the renal tubule. Involved in the transport of neuroactive tryptophan metabolites kynurenate and xanthurenate. Functions as a biopterin transporters involved in the uptake and the secretion of coenzymes tetrahydrobiopterin (BH4), dihydrobiopterin (BH2) and sepiapterin to urine, thereby determining baseline levels of blood biopterins (By similarity). May be involved in the basolateral transport of steviol, a metabolite of the popular sugar substitute stevioside (By similarity). May participate in the detoxification/ renal excretion of drugs and xenobiotics, such as the histamine H(2)-receptor antagonists fexofenadine and cimetidine, the antibiotic benzylpenicillin (PCG), the anionic herbicide 2,4-dichloro-phenoxyacetate (2,4-D), the diagnostic agent p-aminohippurate (PAH), the antiviral acyclovir (ACV), and the mycotoxin ochratoxin (OTA), by transporting these exogenous organic anions across the cell membrane in exchange for dicarboxylates such as 2-oxoglutarate (By similarity). May contribute to the release of cortisol in the adrenals (By similarity). Involved in one of the detoxification systems on the choroid plexus (CP), removes substrates such as E1S or taurocholate (TC), PCG, 2,4-D and PAH, from the cerebrospinal fluid (CSF) to the blood for eventual excretion in urine and bile (PubMed:12011098). Also contributes to the uptake of several other organic compounds such as the prostanoids prostaglandin E(2) and prostaglandin F(2-alpha), L-carnitine, and the therapeutic drugs allopurinol, 6-mercaptopurine (6-MP) and 5-fluorouracil (5-FU) (PubMed:15100168, PubMed:17220594). Mediates the transport of PAH, PCG, and the statins pravastatin and pitavastatin, from the cerebrum into the blood circulation across the blood-brain barrier (BBB) (By similarity). Contributes to the renal uptake of potent uremic toxins (indoxyl sulfate (IS), indole acetate (IA), hippurate/N-benzoylglycine (HA) and 3-carboxy-4-methyl-5-propyl-2-furanpropionate (CMPF)), pravastatin, PCG, E1S and dehydroepiandrosterone sulfate (DHEAS), and is partly involved in the renal uptake of temocaprilat (an angiotensin-converting enzyme (ACE) inhibitor) (By similarity). In summary, plays a role in the efflux of drugs and xenobiotics, helping reduce their undesired toxicological effects on the body (By similarity).</text>
</comment>
<comment type="catalytic activity">
    <reaction evidence="11 18 19 22">
        <text>estrone 3-sulfate(out) + glutarate(in) = estrone 3-sulfate(in) + glutarate(out)</text>
        <dbReference type="Rhea" id="RHEA:72151"/>
        <dbReference type="ChEBI" id="CHEBI:30921"/>
        <dbReference type="ChEBI" id="CHEBI:60050"/>
    </reaction>
</comment>
<comment type="catalytic activity">
    <reaction evidence="21">
        <text>estrone 3-sulfate(in) + 2-oxoglutarate(out) = estrone 3-sulfate(out) + 2-oxoglutarate(in)</text>
        <dbReference type="Rhea" id="RHEA:72399"/>
        <dbReference type="ChEBI" id="CHEBI:16810"/>
        <dbReference type="ChEBI" id="CHEBI:60050"/>
    </reaction>
</comment>
<comment type="catalytic activity">
    <reaction evidence="18">
        <text>taurocholate(out) + glutarate(in) = taurocholate(in) + glutarate(out)</text>
        <dbReference type="Rhea" id="RHEA:72159"/>
        <dbReference type="ChEBI" id="CHEBI:30921"/>
        <dbReference type="ChEBI" id="CHEBI:36257"/>
    </reaction>
</comment>
<comment type="catalytic activity">
    <reaction evidence="22">
        <text>dehydroepiandrosterone 3-sulfate(out) + glutarate(in) = dehydroepiandrosterone 3-sulfate(in) + glutarate(out)</text>
        <dbReference type="Rhea" id="RHEA:72355"/>
        <dbReference type="ChEBI" id="CHEBI:30921"/>
        <dbReference type="ChEBI" id="CHEBI:57905"/>
    </reaction>
</comment>
<comment type="catalytic activity">
    <reaction evidence="2">
        <text>glutarate(in) + 2-oxoglutarate(out) = glutarate(out) + 2-oxoglutarate(in)</text>
        <dbReference type="Rhea" id="RHEA:71751"/>
        <dbReference type="ChEBI" id="CHEBI:16810"/>
        <dbReference type="ChEBI" id="CHEBI:30921"/>
    </reaction>
</comment>
<comment type="catalytic activity">
    <reaction evidence="2">
        <text>urate(in) + 2-oxoglutarate(out) = urate(out) + 2-oxoglutarate(in)</text>
        <dbReference type="Rhea" id="RHEA:72403"/>
        <dbReference type="ChEBI" id="CHEBI:16810"/>
        <dbReference type="ChEBI" id="CHEBI:17775"/>
    </reaction>
</comment>
<comment type="catalytic activity">
    <reaction evidence="20">
        <text>prostaglandin F2alpha(out) + glutarate(in) = prostaglandin F2alpha(in) + glutarate(out)</text>
        <dbReference type="Rhea" id="RHEA:72503"/>
        <dbReference type="ChEBI" id="CHEBI:30921"/>
        <dbReference type="ChEBI" id="CHEBI:57404"/>
    </reaction>
</comment>
<comment type="catalytic activity">
    <reaction evidence="20">
        <text>prostaglandin F2alpha(out) + 2-oxoglutarate(in) = prostaglandin F2alpha(in) + 2-oxoglutarate(out)</text>
        <dbReference type="Rhea" id="RHEA:72507"/>
        <dbReference type="ChEBI" id="CHEBI:16810"/>
        <dbReference type="ChEBI" id="CHEBI:57404"/>
    </reaction>
</comment>
<comment type="catalytic activity">
    <reaction evidence="20">
        <text>(R)-carnitine(out) + 2-oxoglutarate(in) = (R)-carnitine(in) + 2-oxoglutarate(out)</text>
        <dbReference type="Rhea" id="RHEA:72511"/>
        <dbReference type="ChEBI" id="CHEBI:16347"/>
        <dbReference type="ChEBI" id="CHEBI:16810"/>
    </reaction>
</comment>
<comment type="catalytic activity">
    <reaction evidence="20">
        <text>glutarate(in) + (R)-carnitine(out) = glutarate(out) + (R)-carnitine(in)</text>
        <dbReference type="Rhea" id="RHEA:72515"/>
        <dbReference type="ChEBI" id="CHEBI:16347"/>
        <dbReference type="ChEBI" id="CHEBI:30921"/>
    </reaction>
</comment>
<comment type="catalytic activity">
    <reaction evidence="20">
        <text>prostaglandin E2(out) + 2-oxoglutarate(in) = prostaglandin E2(in) + 2-oxoglutarate(out)</text>
        <dbReference type="Rhea" id="RHEA:72499"/>
        <dbReference type="ChEBI" id="CHEBI:16810"/>
        <dbReference type="ChEBI" id="CHEBI:606564"/>
    </reaction>
</comment>
<comment type="catalytic activity">
    <reaction evidence="20">
        <text>prostaglandin E2(out) + glutarate(in) = prostaglandin E2(in) + glutarate(out)</text>
        <dbReference type="Rhea" id="RHEA:72495"/>
        <dbReference type="ChEBI" id="CHEBI:30921"/>
        <dbReference type="ChEBI" id="CHEBI:606564"/>
    </reaction>
</comment>
<comment type="catalytic activity">
    <reaction evidence="2">
        <text>urate(in) + glutarate(out) = urate(out) + glutarate(in)</text>
        <dbReference type="Rhea" id="RHEA:72551"/>
        <dbReference type="ChEBI" id="CHEBI:17775"/>
        <dbReference type="ChEBI" id="CHEBI:30921"/>
    </reaction>
</comment>
<comment type="catalytic activity">
    <reaction evidence="18">
        <text>taurocholate(out) + 2-oxoglutarate(in) = taurocholate(in) + 2-oxoglutarate(out)</text>
        <dbReference type="Rhea" id="RHEA:72547"/>
        <dbReference type="ChEBI" id="CHEBI:16810"/>
        <dbReference type="ChEBI" id="CHEBI:36257"/>
    </reaction>
</comment>
<comment type="catalytic activity">
    <reaction evidence="22">
        <text>dehydroepiandrosterone 3-sulfate(out) + 2-oxoglutarate(in) = dehydroepiandrosterone 3-sulfate(in) + 2-oxoglutarate(out)</text>
        <dbReference type="Rhea" id="RHEA:72543"/>
        <dbReference type="ChEBI" id="CHEBI:16810"/>
        <dbReference type="ChEBI" id="CHEBI:57905"/>
    </reaction>
</comment>
<comment type="catalytic activity">
    <reaction evidence="2">
        <text>kynurenate(out) + a dicarboxylate(in) = kynurenate(in) + a dicarboxylate(out)</text>
        <dbReference type="Rhea" id="RHEA:76087"/>
        <dbReference type="ChEBI" id="CHEBI:28965"/>
        <dbReference type="ChEBI" id="CHEBI:58454"/>
    </reaction>
</comment>
<comment type="catalytic activity">
    <reaction evidence="2">
        <text>(indol-3-yl)acetate(out) + a dicarboxylate(in) = (indol-3-yl)acetate(in) + a dicarboxylate(out)</text>
        <dbReference type="Rhea" id="RHEA:75983"/>
        <dbReference type="ChEBI" id="CHEBI:28965"/>
        <dbReference type="ChEBI" id="CHEBI:30854"/>
    </reaction>
</comment>
<comment type="catalytic activity">
    <reaction evidence="2">
        <text>indoxyl sulfate(out) + a dicarboxylate(in) = indoxyl sulfate(in) + a dicarboxylate(out)</text>
        <dbReference type="Rhea" id="RHEA:75987"/>
        <dbReference type="ChEBI" id="CHEBI:28965"/>
        <dbReference type="ChEBI" id="CHEBI:144643"/>
    </reaction>
</comment>
<comment type="catalytic activity">
    <reaction evidence="2">
        <text>N-benzoylglycine(out) + a dicarboxylate(in) = N-benzoylglycine(in) + a dicarboxylate(out)</text>
        <dbReference type="Rhea" id="RHEA:75991"/>
        <dbReference type="ChEBI" id="CHEBI:28965"/>
        <dbReference type="ChEBI" id="CHEBI:606565"/>
    </reaction>
</comment>
<comment type="catalytic activity">
    <reaction evidence="2">
        <text>3-carboxy-4-methyl-5-propyl-2-furanpropanoate(out) + a dicarboxylate(in) = 3-carboxy-4-methyl-5-propyl-2-furanpropanoate(in) + a dicarboxylate(out)</text>
        <dbReference type="Rhea" id="RHEA:75995"/>
        <dbReference type="ChEBI" id="CHEBI:28965"/>
        <dbReference type="ChEBI" id="CHEBI:194524"/>
    </reaction>
</comment>
<comment type="catalytic activity">
    <reaction evidence="2">
        <text>(6R)-L-erythro-5,6,7,8-tetrahydrobiopterin(out) + a dicarboxylate(in) = (6R)-L-erythro-5,6,7,8-tetrahydrobiopterin(in) + a dicarboxylate(out)</text>
        <dbReference type="Rhea" id="RHEA:76071"/>
        <dbReference type="ChEBI" id="CHEBI:28965"/>
        <dbReference type="ChEBI" id="CHEBI:59560"/>
    </reaction>
</comment>
<comment type="catalytic activity">
    <reaction evidence="2">
        <text>L-erythro-7,8-dihydrobiopterin(out) + a dicarboxylate(in) = L-erythro-7,8-dihydrobiopterin(in) + a dicarboxylate(out)</text>
        <dbReference type="Rhea" id="RHEA:76075"/>
        <dbReference type="ChEBI" id="CHEBI:28965"/>
        <dbReference type="ChEBI" id="CHEBI:43029"/>
    </reaction>
</comment>
<comment type="catalytic activity">
    <reaction evidence="2">
        <text>L-sepiapterin(out) + a dicarboxylate(in) = L-sepiapterin(in) + a dicarboxylate(out)</text>
        <dbReference type="Rhea" id="RHEA:76079"/>
        <dbReference type="ChEBI" id="CHEBI:28965"/>
        <dbReference type="ChEBI" id="CHEBI:194527"/>
    </reaction>
</comment>
<comment type="activity regulation">
    <text evidence="13">Expression inhibited by androgens such as testosterone.</text>
</comment>
<comment type="biophysicochemical properties">
    <kinetics>
        <KM evidence="9">61.9 nM for L-carnitine</KM>
        <KM evidence="9">4.01 uM for 6-mercaptopurine</KM>
        <KM evidence="9">53.9 nM for 5-fluorouracil</KM>
        <KM evidence="11">1.48 uM for prostaglandin E(2)</KM>
    </kinetics>
</comment>
<comment type="subcellular location">
    <subcellularLocation>
        <location evidence="10 11 13">Basolateral cell membrane</location>
        <topology evidence="17">Multi-pass membrane protein</topology>
    </subcellularLocation>
    <text evidence="1 10">Localized to the basolateral side of all renal epithelia except the glomerulus (PubMed:15944205). Localizes on the brush border membrane of the choroid epithelial cells. Localizes to the basolateral membrane of the proximal tubular cells. Localizes on the abluminal and possibly, luminal membrane of the brain capillary endothelial cells (BCEC) (By similarity).</text>
</comment>
<comment type="tissue specificity">
    <text evidence="6 7 9 10 11 12 13">Expressed mainly in kidney (PubMed:10087192, PubMed:12011098, PubMed:15100168, PubMed:23389457). In kidney, detected in almost all parts of the nephron, including macula densa cells (PubMed:15944205). Expressed (at protein level) throughout the renal cortex (PubMed:17220594). Widely distributed in the brain with no large regional differences (PubMed:21325432). Expressed in the choroid plexus (CP, located in the ventricles of the brain) (PubMed:12011098). Expressed in developing bone (PubMed:10087192). Weakly expressed in brain and eye (PubMed:15100168).</text>
</comment>
<comment type="disruption phenotype">
    <text evidence="7">Mice appear healthy and are fertile. Exhibit a loss of taurocholate, estrone sulfate and para-aminohippurate transport in kidney and of fluorescein (FL) transport in choroid plexus.</text>
</comment>
<comment type="similarity">
    <text evidence="17">Belongs to the major facilitator (TC 2.A.1) superfamily. Organic cation transporter (TC 2.A.1.19) family.</text>
</comment>
<proteinExistence type="evidence at protein level"/>
<sequence>MTFSEILDRVGSMGPFQYLHVTLLALPILGIANHNLLQIFTATTPDHHCRPPPNASLEPWVLPLGPNGKPEKCLRFVHLPNASLPNDTQGATEPCLDGWIYNSTRDTIVTEWDLVCGSNKLKEMAQSVFMAGILVGGPVFGELSDRFGRKPILTWSYLLLAASGSSAAFSPSLTVYMIFRFLCGCSISGISLSTIILNVEWVPTSTRAISSTTIGYCYTIGQFILPGLAYAVPQWRWLQLSVSAAFFIFSLLSWWVPESIRWLVLSGKFSKALKTLQRVATFNGKKEEGEKLTVEELKFNLQKDITSAKVKYGLSDLFRVSILRRVTFCLSLAWFATGFAYYSLAMGVEEFGVNIYILQIIFGGVDIPAKFITILSISYLGRRITQGFLLILAGVAILALIFVSSEMQLLRTALAVFGKGCLSGSFSCLFLYTSELYPTVLRQTGMGISNIWARVGSMIAPLVKITGELQPFIPNVIFGTMTLLGGSAAFFLLETLNRPLPETIEDIQDWYQQTKKTKQEPEAEKASQTIPLKTGGP</sequence>
<dbReference type="EMBL" id="AF078869">
    <property type="protein sequence ID" value="AAC61265.1"/>
    <property type="molecule type" value="mRNA"/>
</dbReference>
<dbReference type="EMBL" id="AK031962">
    <property type="protein sequence ID" value="BAC27624.1"/>
    <property type="molecule type" value="mRNA"/>
</dbReference>
<dbReference type="EMBL" id="AK044336">
    <property type="protein sequence ID" value="BAC31873.1"/>
    <property type="molecule type" value="mRNA"/>
</dbReference>
<dbReference type="EMBL" id="AK157891">
    <property type="protein sequence ID" value="BAE34249.1"/>
    <property type="molecule type" value="mRNA"/>
</dbReference>
<dbReference type="EMBL" id="BC014762">
    <property type="protein sequence ID" value="AAH14762.1"/>
    <property type="molecule type" value="mRNA"/>
</dbReference>
<dbReference type="EMBL" id="AB079895">
    <property type="protein sequence ID" value="BAC53618.1"/>
    <property type="molecule type" value="mRNA"/>
</dbReference>
<dbReference type="CCDS" id="CCDS29537.1"/>
<dbReference type="RefSeq" id="NP_001158106.1">
    <property type="nucleotide sequence ID" value="NM_001164634.2"/>
</dbReference>
<dbReference type="RefSeq" id="NP_001158107.1">
    <property type="nucleotide sequence ID" value="NM_001164635.2"/>
</dbReference>
<dbReference type="RefSeq" id="NP_001398399.1">
    <property type="nucleotide sequence ID" value="NM_001411470.1"/>
</dbReference>
<dbReference type="RefSeq" id="NP_112471.3">
    <property type="nucleotide sequence ID" value="NM_031194.5"/>
</dbReference>
<dbReference type="RefSeq" id="XP_011245473.1">
    <property type="nucleotide sequence ID" value="XM_011247171.1"/>
</dbReference>
<dbReference type="SMR" id="O88909"/>
<dbReference type="FunCoup" id="O88909">
    <property type="interactions" value="30"/>
</dbReference>
<dbReference type="STRING" id="10090.ENSMUSP00000010251"/>
<dbReference type="BindingDB" id="O88909"/>
<dbReference type="ChEMBL" id="CHEMBL2073672"/>
<dbReference type="TCDB" id="2.A.1.19.9">
    <property type="family name" value="the major facilitator superfamily (mfs)"/>
</dbReference>
<dbReference type="GlyCosmos" id="O88909">
    <property type="glycosylation" value="1 site, No reported glycans"/>
</dbReference>
<dbReference type="GlyGen" id="O88909">
    <property type="glycosylation" value="1 site"/>
</dbReference>
<dbReference type="iPTMnet" id="O88909"/>
<dbReference type="PhosphoSitePlus" id="O88909"/>
<dbReference type="jPOST" id="O88909"/>
<dbReference type="PaxDb" id="10090-ENSMUSP00000010251"/>
<dbReference type="ProteomicsDB" id="260887"/>
<dbReference type="Antibodypedia" id="28883">
    <property type="antibodies" value="187 antibodies from 27 providers"/>
</dbReference>
<dbReference type="DNASU" id="19879"/>
<dbReference type="Ensembl" id="ENSMUST00000010251.11">
    <property type="protein sequence ID" value="ENSMUSP00000010251.4"/>
    <property type="gene ID" value="ENSMUSG00000063796.10"/>
</dbReference>
<dbReference type="Ensembl" id="ENSMUST00000170817.2">
    <property type="protein sequence ID" value="ENSMUSP00000131045.2"/>
    <property type="gene ID" value="ENSMUSG00000063796.10"/>
</dbReference>
<dbReference type="GeneID" id="19879"/>
<dbReference type="KEGG" id="mmu:19879"/>
<dbReference type="UCSC" id="uc008gmc.2">
    <property type="organism name" value="mouse"/>
</dbReference>
<dbReference type="AGR" id="MGI:1336187"/>
<dbReference type="CTD" id="9376"/>
<dbReference type="MGI" id="MGI:1336187">
    <property type="gene designation" value="Slc22a8"/>
</dbReference>
<dbReference type="VEuPathDB" id="HostDB:ENSMUSG00000063796"/>
<dbReference type="eggNOG" id="KOG0255">
    <property type="taxonomic scope" value="Eukaryota"/>
</dbReference>
<dbReference type="GeneTree" id="ENSGT00940000154901"/>
<dbReference type="HOGENOM" id="CLU_001265_33_3_1"/>
<dbReference type="InParanoid" id="O88909"/>
<dbReference type="OMA" id="CGGLMPN"/>
<dbReference type="OrthoDB" id="2544694at2759"/>
<dbReference type="PhylomeDB" id="O88909"/>
<dbReference type="TreeFam" id="TF315847"/>
<dbReference type="Reactome" id="R-MMU-561048">
    <property type="pathway name" value="Organic anion transport"/>
</dbReference>
<dbReference type="SABIO-RK" id="O88909"/>
<dbReference type="BioGRID-ORCS" id="19879">
    <property type="hits" value="1 hit in 77 CRISPR screens"/>
</dbReference>
<dbReference type="PRO" id="PR:O88909"/>
<dbReference type="Proteomes" id="UP000000589">
    <property type="component" value="Chromosome 19"/>
</dbReference>
<dbReference type="RNAct" id="O88909">
    <property type="molecule type" value="protein"/>
</dbReference>
<dbReference type="Bgee" id="ENSMUSG00000063796">
    <property type="expression patterns" value="Expressed in right kidney and 98 other cell types or tissues"/>
</dbReference>
<dbReference type="GO" id="GO:0016324">
    <property type="term" value="C:apical plasma membrane"/>
    <property type="evidence" value="ECO:0007669"/>
    <property type="project" value="Ensembl"/>
</dbReference>
<dbReference type="GO" id="GO:0016323">
    <property type="term" value="C:basolateral plasma membrane"/>
    <property type="evidence" value="ECO:0000304"/>
    <property type="project" value="Reactome"/>
</dbReference>
<dbReference type="GO" id="GO:0015297">
    <property type="term" value="F:antiporter activity"/>
    <property type="evidence" value="ECO:0000314"/>
    <property type="project" value="UniProtKB"/>
</dbReference>
<dbReference type="GO" id="GO:0008514">
    <property type="term" value="F:organic anion transmembrane transporter activity"/>
    <property type="evidence" value="ECO:0000314"/>
    <property type="project" value="UniProtKB"/>
</dbReference>
<dbReference type="GO" id="GO:0015132">
    <property type="term" value="F:prostaglandin transmembrane transporter activity"/>
    <property type="evidence" value="ECO:0007669"/>
    <property type="project" value="Ensembl"/>
</dbReference>
<dbReference type="GO" id="GO:0005452">
    <property type="term" value="F:solute:inorganic anion antiporter activity"/>
    <property type="evidence" value="ECO:0007669"/>
    <property type="project" value="Ensembl"/>
</dbReference>
<dbReference type="GO" id="GO:0042910">
    <property type="term" value="F:xenobiotic transmembrane transporter activity"/>
    <property type="evidence" value="ECO:0000250"/>
    <property type="project" value="UniProtKB"/>
</dbReference>
<dbReference type="GO" id="GO:0006811">
    <property type="term" value="P:monoatomic ion transport"/>
    <property type="evidence" value="ECO:0007669"/>
    <property type="project" value="UniProtKB-KW"/>
</dbReference>
<dbReference type="GO" id="GO:0015732">
    <property type="term" value="P:prostaglandin transport"/>
    <property type="evidence" value="ECO:0000250"/>
    <property type="project" value="UniProtKB"/>
</dbReference>
<dbReference type="GO" id="GO:0009636">
    <property type="term" value="P:response to toxic substance"/>
    <property type="evidence" value="ECO:0007669"/>
    <property type="project" value="UniProtKB-KW"/>
</dbReference>
<dbReference type="FunFam" id="1.20.1250.20:FF:000023">
    <property type="entry name" value="Solute carrier family 22 member 6"/>
    <property type="match status" value="1"/>
</dbReference>
<dbReference type="Gene3D" id="1.20.1250.20">
    <property type="entry name" value="MFS general substrate transporter like domains"/>
    <property type="match status" value="1"/>
</dbReference>
<dbReference type="InterPro" id="IPR020846">
    <property type="entry name" value="MFS_dom"/>
</dbReference>
<dbReference type="InterPro" id="IPR005828">
    <property type="entry name" value="MFS_sugar_transport-like"/>
</dbReference>
<dbReference type="InterPro" id="IPR036259">
    <property type="entry name" value="MFS_trans_sf"/>
</dbReference>
<dbReference type="InterPro" id="IPR004749">
    <property type="entry name" value="Orgcat_transp/SVOP"/>
</dbReference>
<dbReference type="NCBIfam" id="TIGR00898">
    <property type="entry name" value="2A0119"/>
    <property type="match status" value="1"/>
</dbReference>
<dbReference type="PANTHER" id="PTHR24064">
    <property type="entry name" value="SOLUTE CARRIER FAMILY 22 MEMBER"/>
    <property type="match status" value="1"/>
</dbReference>
<dbReference type="Pfam" id="PF00083">
    <property type="entry name" value="Sugar_tr"/>
    <property type="match status" value="1"/>
</dbReference>
<dbReference type="SUPFAM" id="SSF103473">
    <property type="entry name" value="MFS general substrate transporter"/>
    <property type="match status" value="1"/>
</dbReference>
<dbReference type="PROSITE" id="PS50850">
    <property type="entry name" value="MFS"/>
    <property type="match status" value="1"/>
</dbReference>
<evidence type="ECO:0000250" key="1"/>
<evidence type="ECO:0000250" key="2">
    <source>
        <dbReference type="UniProtKB" id="Q8TCC7"/>
    </source>
</evidence>
<evidence type="ECO:0000250" key="3">
    <source>
        <dbReference type="UniProtKB" id="Q9R1U7"/>
    </source>
</evidence>
<evidence type="ECO:0000255" key="4"/>
<evidence type="ECO:0000256" key="5">
    <source>
        <dbReference type="SAM" id="MobiDB-lite"/>
    </source>
</evidence>
<evidence type="ECO:0000269" key="6">
    <source>
    </source>
</evidence>
<evidence type="ECO:0000269" key="7">
    <source>
    </source>
</evidence>
<evidence type="ECO:0000269" key="8">
    <source>
    </source>
</evidence>
<evidence type="ECO:0000269" key="9">
    <source>
    </source>
</evidence>
<evidence type="ECO:0000269" key="10">
    <source>
    </source>
</evidence>
<evidence type="ECO:0000269" key="11">
    <source>
    </source>
</evidence>
<evidence type="ECO:0000269" key="12">
    <source>
    </source>
</evidence>
<evidence type="ECO:0000269" key="13">
    <source>
    </source>
</evidence>
<evidence type="ECO:0000303" key="14">
    <source>
    </source>
</evidence>
<evidence type="ECO:0000303" key="15">
    <source>
    </source>
</evidence>
<evidence type="ECO:0000303" key="16">
    <source>
    </source>
</evidence>
<evidence type="ECO:0000305" key="17"/>
<evidence type="ECO:0000305" key="18">
    <source>
    </source>
</evidence>
<evidence type="ECO:0000305" key="19">
    <source>
    </source>
</evidence>
<evidence type="ECO:0000305" key="20">
    <source>
    </source>
</evidence>
<evidence type="ECO:0000305" key="21">
    <source>
    </source>
</evidence>
<evidence type="ECO:0000305" key="22">
    <source>
    </source>
</evidence>